<gene>
    <name evidence="1" type="primary">metG</name>
    <name type="ordered locus">Bpro_0924</name>
</gene>
<dbReference type="EC" id="6.1.1.10" evidence="1"/>
<dbReference type="EMBL" id="CP000316">
    <property type="protein sequence ID" value="ABE42880.1"/>
    <property type="molecule type" value="Genomic_DNA"/>
</dbReference>
<dbReference type="RefSeq" id="WP_011481882.1">
    <property type="nucleotide sequence ID" value="NC_007948.1"/>
</dbReference>
<dbReference type="SMR" id="Q12F12"/>
<dbReference type="STRING" id="296591.Bpro_0924"/>
<dbReference type="KEGG" id="pol:Bpro_0924"/>
<dbReference type="eggNOG" id="COG0073">
    <property type="taxonomic scope" value="Bacteria"/>
</dbReference>
<dbReference type="eggNOG" id="COG0143">
    <property type="taxonomic scope" value="Bacteria"/>
</dbReference>
<dbReference type="HOGENOM" id="CLU_009710_7_0_4"/>
<dbReference type="OrthoDB" id="9810191at2"/>
<dbReference type="Proteomes" id="UP000001983">
    <property type="component" value="Chromosome"/>
</dbReference>
<dbReference type="GO" id="GO:0005829">
    <property type="term" value="C:cytosol"/>
    <property type="evidence" value="ECO:0007669"/>
    <property type="project" value="TreeGrafter"/>
</dbReference>
<dbReference type="GO" id="GO:0005524">
    <property type="term" value="F:ATP binding"/>
    <property type="evidence" value="ECO:0007669"/>
    <property type="project" value="UniProtKB-UniRule"/>
</dbReference>
<dbReference type="GO" id="GO:0046872">
    <property type="term" value="F:metal ion binding"/>
    <property type="evidence" value="ECO:0007669"/>
    <property type="project" value="UniProtKB-KW"/>
</dbReference>
<dbReference type="GO" id="GO:0004825">
    <property type="term" value="F:methionine-tRNA ligase activity"/>
    <property type="evidence" value="ECO:0007669"/>
    <property type="project" value="UniProtKB-UniRule"/>
</dbReference>
<dbReference type="GO" id="GO:0000049">
    <property type="term" value="F:tRNA binding"/>
    <property type="evidence" value="ECO:0007669"/>
    <property type="project" value="UniProtKB-KW"/>
</dbReference>
<dbReference type="GO" id="GO:0006431">
    <property type="term" value="P:methionyl-tRNA aminoacylation"/>
    <property type="evidence" value="ECO:0007669"/>
    <property type="project" value="UniProtKB-UniRule"/>
</dbReference>
<dbReference type="CDD" id="cd07957">
    <property type="entry name" value="Anticodon_Ia_Met"/>
    <property type="match status" value="1"/>
</dbReference>
<dbReference type="CDD" id="cd00814">
    <property type="entry name" value="MetRS_core"/>
    <property type="match status" value="1"/>
</dbReference>
<dbReference type="CDD" id="cd02800">
    <property type="entry name" value="tRNA_bind_EcMetRS_like"/>
    <property type="match status" value="1"/>
</dbReference>
<dbReference type="FunFam" id="2.20.28.20:FF:000001">
    <property type="entry name" value="Methionine--tRNA ligase"/>
    <property type="match status" value="1"/>
</dbReference>
<dbReference type="FunFam" id="2.40.50.140:FF:000042">
    <property type="entry name" value="Methionine--tRNA ligase"/>
    <property type="match status" value="1"/>
</dbReference>
<dbReference type="Gene3D" id="3.40.50.620">
    <property type="entry name" value="HUPs"/>
    <property type="match status" value="1"/>
</dbReference>
<dbReference type="Gene3D" id="1.10.730.10">
    <property type="entry name" value="Isoleucyl-tRNA Synthetase, Domain 1"/>
    <property type="match status" value="1"/>
</dbReference>
<dbReference type="Gene3D" id="2.20.28.20">
    <property type="entry name" value="Methionyl-tRNA synthetase, Zn-domain"/>
    <property type="match status" value="1"/>
</dbReference>
<dbReference type="Gene3D" id="2.40.50.140">
    <property type="entry name" value="Nucleic acid-binding proteins"/>
    <property type="match status" value="1"/>
</dbReference>
<dbReference type="HAMAP" id="MF_00098">
    <property type="entry name" value="Met_tRNA_synth_type1"/>
    <property type="match status" value="1"/>
</dbReference>
<dbReference type="InterPro" id="IPR001412">
    <property type="entry name" value="aa-tRNA-synth_I_CS"/>
</dbReference>
<dbReference type="InterPro" id="IPR041872">
    <property type="entry name" value="Anticodon_Met"/>
</dbReference>
<dbReference type="InterPro" id="IPR004495">
    <property type="entry name" value="Met-tRNA-synth_bsu_C"/>
</dbReference>
<dbReference type="InterPro" id="IPR023458">
    <property type="entry name" value="Met-tRNA_ligase_1"/>
</dbReference>
<dbReference type="InterPro" id="IPR014758">
    <property type="entry name" value="Met-tRNA_synth"/>
</dbReference>
<dbReference type="InterPro" id="IPR015413">
    <property type="entry name" value="Methionyl/Leucyl_tRNA_Synth"/>
</dbReference>
<dbReference type="InterPro" id="IPR033911">
    <property type="entry name" value="MetRS_core"/>
</dbReference>
<dbReference type="InterPro" id="IPR029038">
    <property type="entry name" value="MetRS_Zn"/>
</dbReference>
<dbReference type="InterPro" id="IPR012340">
    <property type="entry name" value="NA-bd_OB-fold"/>
</dbReference>
<dbReference type="InterPro" id="IPR014729">
    <property type="entry name" value="Rossmann-like_a/b/a_fold"/>
</dbReference>
<dbReference type="InterPro" id="IPR002547">
    <property type="entry name" value="tRNA-bd_dom"/>
</dbReference>
<dbReference type="InterPro" id="IPR009080">
    <property type="entry name" value="tRNAsynth_Ia_anticodon-bd"/>
</dbReference>
<dbReference type="NCBIfam" id="TIGR00398">
    <property type="entry name" value="metG"/>
    <property type="match status" value="1"/>
</dbReference>
<dbReference type="NCBIfam" id="TIGR00399">
    <property type="entry name" value="metG_C_term"/>
    <property type="match status" value="1"/>
</dbReference>
<dbReference type="NCBIfam" id="NF001100">
    <property type="entry name" value="PRK00133.1"/>
    <property type="match status" value="1"/>
</dbReference>
<dbReference type="PANTHER" id="PTHR45765">
    <property type="entry name" value="METHIONINE--TRNA LIGASE"/>
    <property type="match status" value="1"/>
</dbReference>
<dbReference type="PANTHER" id="PTHR45765:SF1">
    <property type="entry name" value="METHIONINE--TRNA LIGASE, CYTOPLASMIC"/>
    <property type="match status" value="1"/>
</dbReference>
<dbReference type="Pfam" id="PF09334">
    <property type="entry name" value="tRNA-synt_1g"/>
    <property type="match status" value="1"/>
</dbReference>
<dbReference type="Pfam" id="PF01588">
    <property type="entry name" value="tRNA_bind"/>
    <property type="match status" value="1"/>
</dbReference>
<dbReference type="PRINTS" id="PR01041">
    <property type="entry name" value="TRNASYNTHMET"/>
</dbReference>
<dbReference type="SUPFAM" id="SSF47323">
    <property type="entry name" value="Anticodon-binding domain of a subclass of class I aminoacyl-tRNA synthetases"/>
    <property type="match status" value="1"/>
</dbReference>
<dbReference type="SUPFAM" id="SSF57770">
    <property type="entry name" value="Methionyl-tRNA synthetase (MetRS), Zn-domain"/>
    <property type="match status" value="1"/>
</dbReference>
<dbReference type="SUPFAM" id="SSF50249">
    <property type="entry name" value="Nucleic acid-binding proteins"/>
    <property type="match status" value="1"/>
</dbReference>
<dbReference type="SUPFAM" id="SSF52374">
    <property type="entry name" value="Nucleotidylyl transferase"/>
    <property type="match status" value="1"/>
</dbReference>
<dbReference type="PROSITE" id="PS00178">
    <property type="entry name" value="AA_TRNA_LIGASE_I"/>
    <property type="match status" value="1"/>
</dbReference>
<dbReference type="PROSITE" id="PS50886">
    <property type="entry name" value="TRBD"/>
    <property type="match status" value="1"/>
</dbReference>
<evidence type="ECO:0000255" key="1">
    <source>
        <dbReference type="HAMAP-Rule" id="MF_00098"/>
    </source>
</evidence>
<sequence length="689" mass="76388">MSQRRLFVTTALPYANGNFHIGHIMEYIQADIWVRYQRMQGHEVNFVGADDAHGAPIMIAAEKAGKTPQQFVADIAAGRKPYLDGFHISFDNWHSTDGPENHQLAQQIYLDLKKAGLIETKTVEQFFDPDKNMFLPDRFIKGQCPKCGAKDQYGDNCEVCGAVYAPTDLINPYSALSGATPVLKSSEHFFFRLSDPRCVAFLEQWTQDGMLQTEVANKVKEWFSPRQNVDGTTSEGLDDWDISRDAPYFGIEIPDAPGKYFYVWLDAPVGYLASLKNLLDKKGLDYDAYMADPGLEQYHFIGKDIITFHTLFWPAMLHFSGRKTPDNVFVHGFLTVNNGEKMSKSRGTGLDPLKYLNLGMNPEWLRYYLAAKLNARNEDIDFNPEDFMARVNADLVGKYINIASRAAGFISKRFDGRLGEPSADGDALLEVLRGASPAIQELYAEREYGKALREVMQLADRVNGYVDQNKPWELAKQPGMEARLLDVCTVCIEAFRLLTIYLKPVLPALGTQVEDFLKTGSLTFRDAGASLGSGHVIGEYKHLMQRVDVKQLDALFEPPAAAPEPAQLTPGGEALAAPITIDDFAKVDLRIAKIVNCEAVEGSTKLLRLTLDVGEGKMRNVFSGIASAYTPDQLIGKHTVVVANLAPRKMKFGVSEGMVLAASHADEKAQPGIYVLEPLPGASPGLRVR</sequence>
<feature type="chain" id="PRO_0000331863" description="Methionine--tRNA ligase">
    <location>
        <begin position="1"/>
        <end position="689"/>
    </location>
</feature>
<feature type="domain" description="tRNA-binding" evidence="1">
    <location>
        <begin position="583"/>
        <end position="689"/>
    </location>
</feature>
<feature type="short sequence motif" description="'HIGH' region">
    <location>
        <begin position="13"/>
        <end position="23"/>
    </location>
</feature>
<feature type="short sequence motif" description="'KMSKS' region">
    <location>
        <begin position="341"/>
        <end position="345"/>
    </location>
</feature>
<feature type="binding site" evidence="1">
    <location>
        <position position="144"/>
    </location>
    <ligand>
        <name>Zn(2+)</name>
        <dbReference type="ChEBI" id="CHEBI:29105"/>
    </ligand>
</feature>
<feature type="binding site" evidence="1">
    <location>
        <position position="147"/>
    </location>
    <ligand>
        <name>Zn(2+)</name>
        <dbReference type="ChEBI" id="CHEBI:29105"/>
    </ligand>
</feature>
<feature type="binding site" evidence="1">
    <location>
        <position position="157"/>
    </location>
    <ligand>
        <name>Zn(2+)</name>
        <dbReference type="ChEBI" id="CHEBI:29105"/>
    </ligand>
</feature>
<feature type="binding site" evidence="1">
    <location>
        <position position="160"/>
    </location>
    <ligand>
        <name>Zn(2+)</name>
        <dbReference type="ChEBI" id="CHEBI:29105"/>
    </ligand>
</feature>
<feature type="binding site" evidence="1">
    <location>
        <position position="344"/>
    </location>
    <ligand>
        <name>ATP</name>
        <dbReference type="ChEBI" id="CHEBI:30616"/>
    </ligand>
</feature>
<organism>
    <name type="scientific">Polaromonas sp. (strain JS666 / ATCC BAA-500)</name>
    <dbReference type="NCBI Taxonomy" id="296591"/>
    <lineage>
        <taxon>Bacteria</taxon>
        <taxon>Pseudomonadati</taxon>
        <taxon>Pseudomonadota</taxon>
        <taxon>Betaproteobacteria</taxon>
        <taxon>Burkholderiales</taxon>
        <taxon>Comamonadaceae</taxon>
        <taxon>Polaromonas</taxon>
    </lineage>
</organism>
<protein>
    <recommendedName>
        <fullName evidence="1">Methionine--tRNA ligase</fullName>
        <ecNumber evidence="1">6.1.1.10</ecNumber>
    </recommendedName>
    <alternativeName>
        <fullName evidence="1">Methionyl-tRNA synthetase</fullName>
        <shortName evidence="1">MetRS</shortName>
    </alternativeName>
</protein>
<reference key="1">
    <citation type="journal article" date="2008" name="Appl. Environ. Microbiol.">
        <title>The genome of Polaromonas sp. strain JS666: insights into the evolution of a hydrocarbon- and xenobiotic-degrading bacterium, and features of relevance to biotechnology.</title>
        <authorList>
            <person name="Mattes T.E."/>
            <person name="Alexander A.K."/>
            <person name="Richardson P.M."/>
            <person name="Munk A.C."/>
            <person name="Han C.S."/>
            <person name="Stothard P."/>
            <person name="Coleman N.V."/>
        </authorList>
    </citation>
    <scope>NUCLEOTIDE SEQUENCE [LARGE SCALE GENOMIC DNA]</scope>
    <source>
        <strain>JS666 / ATCC BAA-500</strain>
    </source>
</reference>
<accession>Q12F12</accession>
<name>SYM_POLSJ</name>
<proteinExistence type="inferred from homology"/>
<keyword id="KW-0030">Aminoacyl-tRNA synthetase</keyword>
<keyword id="KW-0067">ATP-binding</keyword>
<keyword id="KW-0963">Cytoplasm</keyword>
<keyword id="KW-0436">Ligase</keyword>
<keyword id="KW-0479">Metal-binding</keyword>
<keyword id="KW-0547">Nucleotide-binding</keyword>
<keyword id="KW-0648">Protein biosynthesis</keyword>
<keyword id="KW-1185">Reference proteome</keyword>
<keyword id="KW-0694">RNA-binding</keyword>
<keyword id="KW-0820">tRNA-binding</keyword>
<keyword id="KW-0862">Zinc</keyword>
<comment type="function">
    <text evidence="1">Is required not only for elongation of protein synthesis but also for the initiation of all mRNA translation through initiator tRNA(fMet) aminoacylation.</text>
</comment>
<comment type="catalytic activity">
    <reaction evidence="1">
        <text>tRNA(Met) + L-methionine + ATP = L-methionyl-tRNA(Met) + AMP + diphosphate</text>
        <dbReference type="Rhea" id="RHEA:13481"/>
        <dbReference type="Rhea" id="RHEA-COMP:9667"/>
        <dbReference type="Rhea" id="RHEA-COMP:9698"/>
        <dbReference type="ChEBI" id="CHEBI:30616"/>
        <dbReference type="ChEBI" id="CHEBI:33019"/>
        <dbReference type="ChEBI" id="CHEBI:57844"/>
        <dbReference type="ChEBI" id="CHEBI:78442"/>
        <dbReference type="ChEBI" id="CHEBI:78530"/>
        <dbReference type="ChEBI" id="CHEBI:456215"/>
        <dbReference type="EC" id="6.1.1.10"/>
    </reaction>
</comment>
<comment type="cofactor">
    <cofactor evidence="1">
        <name>Zn(2+)</name>
        <dbReference type="ChEBI" id="CHEBI:29105"/>
    </cofactor>
    <text evidence="1">Binds 1 zinc ion per subunit.</text>
</comment>
<comment type="subunit">
    <text evidence="1">Homodimer.</text>
</comment>
<comment type="subcellular location">
    <subcellularLocation>
        <location evidence="1">Cytoplasm</location>
    </subcellularLocation>
</comment>
<comment type="similarity">
    <text evidence="1">Belongs to the class-I aminoacyl-tRNA synthetase family. MetG type 1 subfamily.</text>
</comment>